<feature type="chain" id="PRO_1000142723" description="Large ribosomal subunit protein uL18">
    <location>
        <begin position="1"/>
        <end position="127"/>
    </location>
</feature>
<organism>
    <name type="scientific">Streptomyces griseus subsp. griseus (strain JCM 4626 / CBS 651.72 / NBRC 13350 / KCC S-0626 / ISP 5235)</name>
    <dbReference type="NCBI Taxonomy" id="455632"/>
    <lineage>
        <taxon>Bacteria</taxon>
        <taxon>Bacillati</taxon>
        <taxon>Actinomycetota</taxon>
        <taxon>Actinomycetes</taxon>
        <taxon>Kitasatosporales</taxon>
        <taxon>Streptomycetaceae</taxon>
        <taxon>Streptomyces</taxon>
    </lineage>
</organism>
<keyword id="KW-0687">Ribonucleoprotein</keyword>
<keyword id="KW-0689">Ribosomal protein</keyword>
<keyword id="KW-0694">RNA-binding</keyword>
<keyword id="KW-0699">rRNA-binding</keyword>
<comment type="function">
    <text evidence="1">This is one of the proteins that bind and probably mediate the attachment of the 5S RNA into the large ribosomal subunit, where it forms part of the central protuberance.</text>
</comment>
<comment type="subunit">
    <text evidence="1">Part of the 50S ribosomal subunit; part of the 5S rRNA/L5/L18/L25 subcomplex. Contacts the 5S and 23S rRNAs.</text>
</comment>
<comment type="similarity">
    <text evidence="1">Belongs to the universal ribosomal protein uL18 family.</text>
</comment>
<sequence>MAYGVKIAKGDAYKRAARKRRHIRVRKHLSGSPERPRLVVTRSNRHIVAQVIDDIAGHTLASASTLDTSIRGGEGDKSAQAQQVGALVAERAKAAGVEAVVFDRGGNQYAGRIAALADAAREAGLKF</sequence>
<gene>
    <name evidence="1" type="primary">rplR</name>
    <name type="ordered locus">SGR_2818</name>
</gene>
<name>RL18_STRGG</name>
<accession>B1W3Z1</accession>
<protein>
    <recommendedName>
        <fullName evidence="1">Large ribosomal subunit protein uL18</fullName>
    </recommendedName>
    <alternativeName>
        <fullName evidence="2">50S ribosomal protein L18</fullName>
    </alternativeName>
</protein>
<reference key="1">
    <citation type="journal article" date="2008" name="J. Bacteriol.">
        <title>Genome sequence of the streptomycin-producing microorganism Streptomyces griseus IFO 13350.</title>
        <authorList>
            <person name="Ohnishi Y."/>
            <person name="Ishikawa J."/>
            <person name="Hara H."/>
            <person name="Suzuki H."/>
            <person name="Ikenoya M."/>
            <person name="Ikeda H."/>
            <person name="Yamashita A."/>
            <person name="Hattori M."/>
            <person name="Horinouchi S."/>
        </authorList>
    </citation>
    <scope>NUCLEOTIDE SEQUENCE [LARGE SCALE GENOMIC DNA]</scope>
    <source>
        <strain>JCM 4626 / CBS 651.72 / NBRC 13350 / KCC S-0626 / ISP 5235</strain>
    </source>
</reference>
<evidence type="ECO:0000255" key="1">
    <source>
        <dbReference type="HAMAP-Rule" id="MF_01337"/>
    </source>
</evidence>
<evidence type="ECO:0000305" key="2"/>
<proteinExistence type="inferred from homology"/>
<dbReference type="EMBL" id="AP009493">
    <property type="protein sequence ID" value="BAG19647.1"/>
    <property type="molecule type" value="Genomic_DNA"/>
</dbReference>
<dbReference type="RefSeq" id="WP_003966945.1">
    <property type="nucleotide sequence ID" value="NC_010572.1"/>
</dbReference>
<dbReference type="SMR" id="B1W3Z1"/>
<dbReference type="GeneID" id="95484868"/>
<dbReference type="KEGG" id="sgr:SGR_2818"/>
<dbReference type="eggNOG" id="COG0256">
    <property type="taxonomic scope" value="Bacteria"/>
</dbReference>
<dbReference type="HOGENOM" id="CLU_098841_0_1_11"/>
<dbReference type="Proteomes" id="UP000001685">
    <property type="component" value="Chromosome"/>
</dbReference>
<dbReference type="GO" id="GO:0022625">
    <property type="term" value="C:cytosolic large ribosomal subunit"/>
    <property type="evidence" value="ECO:0007669"/>
    <property type="project" value="TreeGrafter"/>
</dbReference>
<dbReference type="GO" id="GO:0008097">
    <property type="term" value="F:5S rRNA binding"/>
    <property type="evidence" value="ECO:0007669"/>
    <property type="project" value="TreeGrafter"/>
</dbReference>
<dbReference type="GO" id="GO:0003735">
    <property type="term" value="F:structural constituent of ribosome"/>
    <property type="evidence" value="ECO:0007669"/>
    <property type="project" value="InterPro"/>
</dbReference>
<dbReference type="GO" id="GO:0006412">
    <property type="term" value="P:translation"/>
    <property type="evidence" value="ECO:0007669"/>
    <property type="project" value="UniProtKB-UniRule"/>
</dbReference>
<dbReference type="CDD" id="cd00432">
    <property type="entry name" value="Ribosomal_L18_L5e"/>
    <property type="match status" value="1"/>
</dbReference>
<dbReference type="FunFam" id="3.30.420.100:FF:000001">
    <property type="entry name" value="50S ribosomal protein L18"/>
    <property type="match status" value="1"/>
</dbReference>
<dbReference type="Gene3D" id="3.30.420.100">
    <property type="match status" value="1"/>
</dbReference>
<dbReference type="HAMAP" id="MF_01337_B">
    <property type="entry name" value="Ribosomal_uL18_B"/>
    <property type="match status" value="1"/>
</dbReference>
<dbReference type="InterPro" id="IPR004389">
    <property type="entry name" value="Ribosomal_uL18_bac-type"/>
</dbReference>
<dbReference type="InterPro" id="IPR005484">
    <property type="entry name" value="Ribosomal_uL18_bac/euk"/>
</dbReference>
<dbReference type="NCBIfam" id="TIGR00060">
    <property type="entry name" value="L18_bact"/>
    <property type="match status" value="1"/>
</dbReference>
<dbReference type="PANTHER" id="PTHR12899">
    <property type="entry name" value="39S RIBOSOMAL PROTEIN L18, MITOCHONDRIAL"/>
    <property type="match status" value="1"/>
</dbReference>
<dbReference type="PANTHER" id="PTHR12899:SF3">
    <property type="entry name" value="LARGE RIBOSOMAL SUBUNIT PROTEIN UL18M"/>
    <property type="match status" value="1"/>
</dbReference>
<dbReference type="Pfam" id="PF00861">
    <property type="entry name" value="Ribosomal_L18p"/>
    <property type="match status" value="1"/>
</dbReference>
<dbReference type="SUPFAM" id="SSF53137">
    <property type="entry name" value="Translational machinery components"/>
    <property type="match status" value="1"/>
</dbReference>